<gene>
    <name evidence="1" type="primary">lspA</name>
    <name type="ordered locus">EFER_0020</name>
</gene>
<proteinExistence type="inferred from homology"/>
<reference key="1">
    <citation type="journal article" date="2009" name="PLoS Genet.">
        <title>Organised genome dynamics in the Escherichia coli species results in highly diverse adaptive paths.</title>
        <authorList>
            <person name="Touchon M."/>
            <person name="Hoede C."/>
            <person name="Tenaillon O."/>
            <person name="Barbe V."/>
            <person name="Baeriswyl S."/>
            <person name="Bidet P."/>
            <person name="Bingen E."/>
            <person name="Bonacorsi S."/>
            <person name="Bouchier C."/>
            <person name="Bouvet O."/>
            <person name="Calteau A."/>
            <person name="Chiapello H."/>
            <person name="Clermont O."/>
            <person name="Cruveiller S."/>
            <person name="Danchin A."/>
            <person name="Diard M."/>
            <person name="Dossat C."/>
            <person name="Karoui M.E."/>
            <person name="Frapy E."/>
            <person name="Garry L."/>
            <person name="Ghigo J.M."/>
            <person name="Gilles A.M."/>
            <person name="Johnson J."/>
            <person name="Le Bouguenec C."/>
            <person name="Lescat M."/>
            <person name="Mangenot S."/>
            <person name="Martinez-Jehanne V."/>
            <person name="Matic I."/>
            <person name="Nassif X."/>
            <person name="Oztas S."/>
            <person name="Petit M.A."/>
            <person name="Pichon C."/>
            <person name="Rouy Z."/>
            <person name="Ruf C.S."/>
            <person name="Schneider D."/>
            <person name="Tourret J."/>
            <person name="Vacherie B."/>
            <person name="Vallenet D."/>
            <person name="Medigue C."/>
            <person name="Rocha E.P.C."/>
            <person name="Denamur E."/>
        </authorList>
    </citation>
    <scope>NUCLEOTIDE SEQUENCE [LARGE SCALE GENOMIC DNA]</scope>
    <source>
        <strain>ATCC 35469 / DSM 13698 / BCRC 15582 / CCUG 18766 / IAM 14443 / JCM 21226 / LMG 7866 / NBRC 102419 / NCTC 12128 / CDC 0568-73</strain>
    </source>
</reference>
<name>LSPA_ESCF3</name>
<sequence>MSQSICSTGLRWLWLVVVVLIIDLGSKYLILQNFALGDTVPLFPSLNLHYARNYGAAFSFLADSGGWQRWFFAGIAIGISVILVVMMYRSKATQKLNNIAYALIIGGALGNLFDRLWHGFVVDMIDFYVGDWHFATFNLADTAICVGAALIVLEGFLPSKAKKQ</sequence>
<evidence type="ECO:0000255" key="1">
    <source>
        <dbReference type="HAMAP-Rule" id="MF_00161"/>
    </source>
</evidence>
<accession>B7LVN3</accession>
<feature type="chain" id="PRO_1000190803" description="Lipoprotein signal peptidase">
    <location>
        <begin position="1"/>
        <end position="164"/>
    </location>
</feature>
<feature type="transmembrane region" description="Helical" evidence="1">
    <location>
        <begin position="12"/>
        <end position="32"/>
    </location>
</feature>
<feature type="transmembrane region" description="Helical" evidence="1">
    <location>
        <begin position="70"/>
        <end position="90"/>
    </location>
</feature>
<feature type="transmembrane region" description="Helical" evidence="1">
    <location>
        <begin position="102"/>
        <end position="122"/>
    </location>
</feature>
<feature type="transmembrane region" description="Helical" evidence="1">
    <location>
        <begin position="137"/>
        <end position="157"/>
    </location>
</feature>
<feature type="active site" evidence="1">
    <location>
        <position position="123"/>
    </location>
</feature>
<feature type="active site" evidence="1">
    <location>
        <position position="141"/>
    </location>
</feature>
<dbReference type="EC" id="3.4.23.36" evidence="1"/>
<dbReference type="EMBL" id="CU928158">
    <property type="protein sequence ID" value="CAQ87607.1"/>
    <property type="molecule type" value="Genomic_DNA"/>
</dbReference>
<dbReference type="RefSeq" id="WP_000083381.1">
    <property type="nucleotide sequence ID" value="NC_011740.1"/>
</dbReference>
<dbReference type="SMR" id="B7LVN3"/>
<dbReference type="MEROPS" id="A08.001"/>
<dbReference type="GeneID" id="75058891"/>
<dbReference type="KEGG" id="efe:EFER_0020"/>
<dbReference type="HOGENOM" id="CLU_083252_4_0_6"/>
<dbReference type="OrthoDB" id="9810259at2"/>
<dbReference type="UniPathway" id="UPA00665"/>
<dbReference type="Proteomes" id="UP000000745">
    <property type="component" value="Chromosome"/>
</dbReference>
<dbReference type="GO" id="GO:0005886">
    <property type="term" value="C:plasma membrane"/>
    <property type="evidence" value="ECO:0007669"/>
    <property type="project" value="UniProtKB-SubCell"/>
</dbReference>
<dbReference type="GO" id="GO:0004190">
    <property type="term" value="F:aspartic-type endopeptidase activity"/>
    <property type="evidence" value="ECO:0007669"/>
    <property type="project" value="UniProtKB-UniRule"/>
</dbReference>
<dbReference type="GO" id="GO:0006508">
    <property type="term" value="P:proteolysis"/>
    <property type="evidence" value="ECO:0007669"/>
    <property type="project" value="UniProtKB-KW"/>
</dbReference>
<dbReference type="HAMAP" id="MF_00161">
    <property type="entry name" value="LspA"/>
    <property type="match status" value="1"/>
</dbReference>
<dbReference type="InterPro" id="IPR001872">
    <property type="entry name" value="Peptidase_A8"/>
</dbReference>
<dbReference type="NCBIfam" id="TIGR00077">
    <property type="entry name" value="lspA"/>
    <property type="match status" value="1"/>
</dbReference>
<dbReference type="PANTHER" id="PTHR33695">
    <property type="entry name" value="LIPOPROTEIN SIGNAL PEPTIDASE"/>
    <property type="match status" value="1"/>
</dbReference>
<dbReference type="PANTHER" id="PTHR33695:SF1">
    <property type="entry name" value="LIPOPROTEIN SIGNAL PEPTIDASE"/>
    <property type="match status" value="1"/>
</dbReference>
<dbReference type="Pfam" id="PF01252">
    <property type="entry name" value="Peptidase_A8"/>
    <property type="match status" value="1"/>
</dbReference>
<dbReference type="PRINTS" id="PR00781">
    <property type="entry name" value="LIPOSIGPTASE"/>
</dbReference>
<dbReference type="PROSITE" id="PS00855">
    <property type="entry name" value="SPASE_II"/>
    <property type="match status" value="1"/>
</dbReference>
<keyword id="KW-0064">Aspartyl protease</keyword>
<keyword id="KW-0997">Cell inner membrane</keyword>
<keyword id="KW-1003">Cell membrane</keyword>
<keyword id="KW-0378">Hydrolase</keyword>
<keyword id="KW-0472">Membrane</keyword>
<keyword id="KW-0645">Protease</keyword>
<keyword id="KW-0812">Transmembrane</keyword>
<keyword id="KW-1133">Transmembrane helix</keyword>
<comment type="function">
    <text evidence="1">This protein specifically catalyzes the removal of signal peptides from prolipoproteins.</text>
</comment>
<comment type="catalytic activity">
    <reaction evidence="1">
        <text>Release of signal peptides from bacterial membrane prolipoproteins. Hydrolyzes -Xaa-Yaa-Zaa-|-(S,diacylglyceryl)Cys-, in which Xaa is hydrophobic (preferably Leu), and Yaa (Ala or Ser) and Zaa (Gly or Ala) have small, neutral side chains.</text>
        <dbReference type="EC" id="3.4.23.36"/>
    </reaction>
</comment>
<comment type="pathway">
    <text evidence="1">Protein modification; lipoprotein biosynthesis (signal peptide cleavage).</text>
</comment>
<comment type="subcellular location">
    <subcellularLocation>
        <location evidence="1">Cell inner membrane</location>
        <topology evidence="1">Multi-pass membrane protein</topology>
    </subcellularLocation>
</comment>
<comment type="similarity">
    <text evidence="1">Belongs to the peptidase A8 family.</text>
</comment>
<organism>
    <name type="scientific">Escherichia fergusonii (strain ATCC 35469 / DSM 13698 / CCUG 18766 / IAM 14443 / JCM 21226 / LMG 7866 / NBRC 102419 / NCTC 12128 / CDC 0568-73)</name>
    <dbReference type="NCBI Taxonomy" id="585054"/>
    <lineage>
        <taxon>Bacteria</taxon>
        <taxon>Pseudomonadati</taxon>
        <taxon>Pseudomonadota</taxon>
        <taxon>Gammaproteobacteria</taxon>
        <taxon>Enterobacterales</taxon>
        <taxon>Enterobacteriaceae</taxon>
        <taxon>Escherichia</taxon>
    </lineage>
</organism>
<protein>
    <recommendedName>
        <fullName evidence="1">Lipoprotein signal peptidase</fullName>
        <ecNumber evidence="1">3.4.23.36</ecNumber>
    </recommendedName>
    <alternativeName>
        <fullName evidence="1">Prolipoprotein signal peptidase</fullName>
    </alternativeName>
    <alternativeName>
        <fullName evidence="1">Signal peptidase II</fullName>
        <shortName evidence="1">SPase II</shortName>
    </alternativeName>
</protein>